<gene>
    <name evidence="2" type="primary">PURA2</name>
    <name type="ordered locus">Sb01g011080</name>
</gene>
<accession>C5WNV2</accession>
<organism>
    <name type="scientific">Sorghum bicolor</name>
    <name type="common">Sorghum</name>
    <name type="synonym">Sorghum vulgare</name>
    <dbReference type="NCBI Taxonomy" id="4558"/>
    <lineage>
        <taxon>Eukaryota</taxon>
        <taxon>Viridiplantae</taxon>
        <taxon>Streptophyta</taxon>
        <taxon>Embryophyta</taxon>
        <taxon>Tracheophyta</taxon>
        <taxon>Spermatophyta</taxon>
        <taxon>Magnoliopsida</taxon>
        <taxon>Liliopsida</taxon>
        <taxon>Poales</taxon>
        <taxon>Poaceae</taxon>
        <taxon>PACMAD clade</taxon>
        <taxon>Panicoideae</taxon>
        <taxon>Andropogonodae</taxon>
        <taxon>Andropogoneae</taxon>
        <taxon>Sorghinae</taxon>
        <taxon>Sorghum</taxon>
    </lineage>
</organism>
<reference key="1">
    <citation type="journal article" date="2009" name="Nature">
        <title>The Sorghum bicolor genome and the diversification of grasses.</title>
        <authorList>
            <person name="Paterson A.H."/>
            <person name="Bowers J.E."/>
            <person name="Bruggmann R."/>
            <person name="Dubchak I."/>
            <person name="Grimwood J."/>
            <person name="Gundlach H."/>
            <person name="Haberer G."/>
            <person name="Hellsten U."/>
            <person name="Mitros T."/>
            <person name="Poliakov A."/>
            <person name="Schmutz J."/>
            <person name="Spannagl M."/>
            <person name="Tang H."/>
            <person name="Wang X."/>
            <person name="Wicker T."/>
            <person name="Bharti A.K."/>
            <person name="Chapman J."/>
            <person name="Feltus F.A."/>
            <person name="Gowik U."/>
            <person name="Grigoriev I.V."/>
            <person name="Lyons E."/>
            <person name="Maher C.A."/>
            <person name="Martis M."/>
            <person name="Narechania A."/>
            <person name="Otillar R.P."/>
            <person name="Penning B.W."/>
            <person name="Salamov A.A."/>
            <person name="Wang Y."/>
            <person name="Zhang L."/>
            <person name="Carpita N.C."/>
            <person name="Freeling M."/>
            <person name="Gingle A.R."/>
            <person name="Hash C.T."/>
            <person name="Keller B."/>
            <person name="Klein P."/>
            <person name="Kresovich S."/>
            <person name="McCann M.C."/>
            <person name="Ming R."/>
            <person name="Peterson D.G."/>
            <person name="Mehboob-ur-Rahman M."/>
            <person name="Ware D."/>
            <person name="Westhoff P."/>
            <person name="Mayer K.F.X."/>
            <person name="Messing J."/>
            <person name="Rokhsar D.S."/>
        </authorList>
    </citation>
    <scope>NUCLEOTIDE SEQUENCE [LARGE SCALE GENOMIC DNA]</scope>
    <source>
        <strain>cv. BTx623</strain>
    </source>
</reference>
<reference key="2">
    <citation type="journal article" date="2018" name="Plant J.">
        <title>The Sorghum bicolor reference genome: improved assembly, gene annotations, a transcriptome atlas, and signatures of genome organization.</title>
        <authorList>
            <person name="McCormick R.F."/>
            <person name="Truong S.K."/>
            <person name="Sreedasyam A."/>
            <person name="Jenkins J."/>
            <person name="Shu S."/>
            <person name="Sims D."/>
            <person name="Kennedy M."/>
            <person name="Amirebrahimi M."/>
            <person name="Weers B.D."/>
            <person name="McKinley B."/>
            <person name="Mattison A."/>
            <person name="Morishige D.T."/>
            <person name="Grimwood J."/>
            <person name="Schmutz J."/>
            <person name="Mullet J.E."/>
        </authorList>
    </citation>
    <scope>GENOME REANNOTATION</scope>
    <source>
        <strain>cv. BTx623</strain>
    </source>
</reference>
<proteinExistence type="inferred from homology"/>
<dbReference type="EC" id="6.3.4.4" evidence="2"/>
<dbReference type="EMBL" id="CM000760">
    <property type="protein sequence ID" value="EER93614.1"/>
    <property type="molecule type" value="Genomic_DNA"/>
</dbReference>
<dbReference type="RefSeq" id="XP_002466616.1">
    <property type="nucleotide sequence ID" value="XM_002466571.1"/>
</dbReference>
<dbReference type="SMR" id="C5WNV2"/>
<dbReference type="FunCoup" id="C5WNV2">
    <property type="interactions" value="2231"/>
</dbReference>
<dbReference type="STRING" id="4558.C5WNV2"/>
<dbReference type="EnsemblPlants" id="EER93614">
    <property type="protein sequence ID" value="EER93614"/>
    <property type="gene ID" value="SORBI_3001G126300"/>
</dbReference>
<dbReference type="GeneID" id="8062947"/>
<dbReference type="Gramene" id="EER93614">
    <property type="protein sequence ID" value="EER93614"/>
    <property type="gene ID" value="SORBI_3001G126300"/>
</dbReference>
<dbReference type="KEGG" id="sbi:8062947"/>
<dbReference type="eggNOG" id="KOG1355">
    <property type="taxonomic scope" value="Eukaryota"/>
</dbReference>
<dbReference type="HOGENOM" id="CLU_029848_0_0_1"/>
<dbReference type="InParanoid" id="C5WNV2"/>
<dbReference type="OMA" id="QSYVRFL"/>
<dbReference type="OrthoDB" id="10265645at2759"/>
<dbReference type="UniPathway" id="UPA00075">
    <property type="reaction ID" value="UER00335"/>
</dbReference>
<dbReference type="Proteomes" id="UP000000768">
    <property type="component" value="Chromosome 1"/>
</dbReference>
<dbReference type="GO" id="GO:0009507">
    <property type="term" value="C:chloroplast"/>
    <property type="evidence" value="ECO:0007669"/>
    <property type="project" value="UniProtKB-SubCell"/>
</dbReference>
<dbReference type="GO" id="GO:0005737">
    <property type="term" value="C:cytoplasm"/>
    <property type="evidence" value="ECO:0000318"/>
    <property type="project" value="GO_Central"/>
</dbReference>
<dbReference type="GO" id="GO:0004019">
    <property type="term" value="F:adenylosuccinate synthase activity"/>
    <property type="evidence" value="ECO:0000318"/>
    <property type="project" value="GO_Central"/>
</dbReference>
<dbReference type="GO" id="GO:0005525">
    <property type="term" value="F:GTP binding"/>
    <property type="evidence" value="ECO:0007669"/>
    <property type="project" value="UniProtKB-UniRule"/>
</dbReference>
<dbReference type="GO" id="GO:0000287">
    <property type="term" value="F:magnesium ion binding"/>
    <property type="evidence" value="ECO:0007669"/>
    <property type="project" value="UniProtKB-UniRule"/>
</dbReference>
<dbReference type="GO" id="GO:0044208">
    <property type="term" value="P:'de novo' AMP biosynthetic process"/>
    <property type="evidence" value="ECO:0000318"/>
    <property type="project" value="GO_Central"/>
</dbReference>
<dbReference type="GO" id="GO:0046040">
    <property type="term" value="P:IMP metabolic process"/>
    <property type="evidence" value="ECO:0000318"/>
    <property type="project" value="GO_Central"/>
</dbReference>
<dbReference type="CDD" id="cd03108">
    <property type="entry name" value="AdSS"/>
    <property type="match status" value="1"/>
</dbReference>
<dbReference type="FunFam" id="3.90.170.10:FF:000001">
    <property type="entry name" value="Adenylosuccinate synthetase"/>
    <property type="match status" value="1"/>
</dbReference>
<dbReference type="FunFam" id="1.10.300.10:FF:000002">
    <property type="entry name" value="Adenylosuccinate synthetase, chloroplastic"/>
    <property type="match status" value="1"/>
</dbReference>
<dbReference type="Gene3D" id="3.40.440.10">
    <property type="entry name" value="Adenylosuccinate Synthetase, subunit A, domain 1"/>
    <property type="match status" value="1"/>
</dbReference>
<dbReference type="Gene3D" id="1.10.300.10">
    <property type="entry name" value="Adenylosuccinate Synthetase, subunit A, domain 2"/>
    <property type="match status" value="1"/>
</dbReference>
<dbReference type="Gene3D" id="3.90.170.10">
    <property type="entry name" value="Adenylosuccinate Synthetase, subunit A, domain 3"/>
    <property type="match status" value="1"/>
</dbReference>
<dbReference type="HAMAP" id="MF_00011">
    <property type="entry name" value="Adenylosucc_synth"/>
    <property type="match status" value="1"/>
</dbReference>
<dbReference type="InterPro" id="IPR018220">
    <property type="entry name" value="Adenylosuccin_syn_GTP-bd"/>
</dbReference>
<dbReference type="InterPro" id="IPR033128">
    <property type="entry name" value="Adenylosuccin_syn_Lys_AS"/>
</dbReference>
<dbReference type="InterPro" id="IPR042109">
    <property type="entry name" value="Adenylosuccinate_synth_dom1"/>
</dbReference>
<dbReference type="InterPro" id="IPR042110">
    <property type="entry name" value="Adenylosuccinate_synth_dom2"/>
</dbReference>
<dbReference type="InterPro" id="IPR042111">
    <property type="entry name" value="Adenylosuccinate_synth_dom3"/>
</dbReference>
<dbReference type="InterPro" id="IPR001114">
    <property type="entry name" value="Adenylosuccinate_synthetase"/>
</dbReference>
<dbReference type="InterPro" id="IPR027417">
    <property type="entry name" value="P-loop_NTPase"/>
</dbReference>
<dbReference type="NCBIfam" id="NF002223">
    <property type="entry name" value="PRK01117.1"/>
    <property type="match status" value="1"/>
</dbReference>
<dbReference type="NCBIfam" id="TIGR00184">
    <property type="entry name" value="purA"/>
    <property type="match status" value="1"/>
</dbReference>
<dbReference type="PANTHER" id="PTHR11846">
    <property type="entry name" value="ADENYLOSUCCINATE SYNTHETASE"/>
    <property type="match status" value="1"/>
</dbReference>
<dbReference type="PANTHER" id="PTHR11846:SF0">
    <property type="entry name" value="ADENYLOSUCCINATE SYNTHETASE"/>
    <property type="match status" value="1"/>
</dbReference>
<dbReference type="Pfam" id="PF00709">
    <property type="entry name" value="Adenylsucc_synt"/>
    <property type="match status" value="1"/>
</dbReference>
<dbReference type="SMART" id="SM00788">
    <property type="entry name" value="Adenylsucc_synt"/>
    <property type="match status" value="1"/>
</dbReference>
<dbReference type="SUPFAM" id="SSF52540">
    <property type="entry name" value="P-loop containing nucleoside triphosphate hydrolases"/>
    <property type="match status" value="1"/>
</dbReference>
<dbReference type="PROSITE" id="PS01266">
    <property type="entry name" value="ADENYLOSUCCIN_SYN_1"/>
    <property type="match status" value="1"/>
</dbReference>
<dbReference type="PROSITE" id="PS00513">
    <property type="entry name" value="ADENYLOSUCCIN_SYN_2"/>
    <property type="match status" value="1"/>
</dbReference>
<keyword id="KW-0150">Chloroplast</keyword>
<keyword id="KW-0342">GTP-binding</keyword>
<keyword id="KW-0436">Ligase</keyword>
<keyword id="KW-0460">Magnesium</keyword>
<keyword id="KW-0479">Metal-binding</keyword>
<keyword id="KW-0547">Nucleotide-binding</keyword>
<keyword id="KW-0934">Plastid</keyword>
<keyword id="KW-0658">Purine biosynthesis</keyword>
<keyword id="KW-1185">Reference proteome</keyword>
<keyword id="KW-0809">Transit peptide</keyword>
<protein>
    <recommendedName>
        <fullName evidence="2">Adenylosuccinate synthetase 2, chloroplastic</fullName>
        <shortName evidence="2">AMPSase 2</shortName>
        <shortName evidence="2">AdSS 2</shortName>
        <ecNumber evidence="2">6.3.4.4</ecNumber>
    </recommendedName>
    <alternativeName>
        <fullName evidence="2">IMP--aspartate ligase 2</fullName>
    </alternativeName>
</protein>
<name>PURA2_SORBI</name>
<sequence length="489" mass="53159">MPLASLSLDPAPFPLIRPAAGWSGRVLPVPGPAPRLCRPLRAAPVAPATTDEPSAAARGRLESLSQVAGVLGTQWGDEGKGKLVDILAQRFDVVARCQGGANAGHTIYNSEGKKFALHLVPSGILNENTQCVIGNGVVVHLPGFFKEIDGLESNGISCKGRLLVSDRAHLLFDLHQVVDGLREVELGNSLIGTTKRGIGPCYSNKVTRNGLRISDLRHMDTFGAKLNNLLRDAALRFKDFEYNSKILKEEVEKYKRFAERLEPFITDTVHFMNQSILQKKKILVEGGQATMLDIDFGTYPFVTSSSPSAGGICTGLGIAPRSLGDIIGVVKAYTTRVGSGPFPTELLGKTGDLLRASGMEFGTTTGRPRRCGWLDIVALKYCCQINGFSSLNLTKLDVLTGLKEIKLGTSYYTDDGNTVQSFPADLDLLEQIKVKYEALPGWEEDISSIRDYSDLPETARRYVERIEELVGIPVHYIGVGPGRDALIYK</sequence>
<comment type="function">
    <text evidence="1">Plays an important role in the de novo pathway and in the salvage pathway of purine nucleotide biosynthesis. Catalyzes the first committed step in the biosynthesis of AMP from IMP (By similarity).</text>
</comment>
<comment type="catalytic activity">
    <reaction evidence="2">
        <text>IMP + L-aspartate + GTP = N(6)-(1,2-dicarboxyethyl)-AMP + GDP + phosphate + 2 H(+)</text>
        <dbReference type="Rhea" id="RHEA:15753"/>
        <dbReference type="ChEBI" id="CHEBI:15378"/>
        <dbReference type="ChEBI" id="CHEBI:29991"/>
        <dbReference type="ChEBI" id="CHEBI:37565"/>
        <dbReference type="ChEBI" id="CHEBI:43474"/>
        <dbReference type="ChEBI" id="CHEBI:57567"/>
        <dbReference type="ChEBI" id="CHEBI:58053"/>
        <dbReference type="ChEBI" id="CHEBI:58189"/>
        <dbReference type="EC" id="6.3.4.4"/>
    </reaction>
</comment>
<comment type="cofactor">
    <cofactor evidence="2">
        <name>Mg(2+)</name>
        <dbReference type="ChEBI" id="CHEBI:18420"/>
    </cofactor>
    <text evidence="2">Binds 1 Mg(2+) ion per subunit.</text>
</comment>
<comment type="pathway">
    <text evidence="2">Purine metabolism; AMP biosynthesis via de novo pathway; AMP from IMP: step 1/2.</text>
</comment>
<comment type="subunit">
    <text evidence="2">Homodimer.</text>
</comment>
<comment type="subcellular location">
    <subcellularLocation>
        <location evidence="2">Plastid</location>
        <location evidence="2">Chloroplast</location>
    </subcellularLocation>
</comment>
<comment type="similarity">
    <text evidence="2">Belongs to the adenylosuccinate synthetase family.</text>
</comment>
<feature type="transit peptide" description="Chloroplast" evidence="2">
    <location>
        <begin position="1"/>
        <end position="54"/>
    </location>
</feature>
<feature type="chain" id="PRO_0000399288" description="Adenylosuccinate synthetase 2, chloroplastic">
    <location>
        <begin position="55"/>
        <end position="489"/>
    </location>
</feature>
<feature type="active site" description="Proton acceptor" evidence="2">
    <location>
        <position position="77"/>
    </location>
</feature>
<feature type="active site" description="Proton donor" evidence="2">
    <location>
        <position position="105"/>
    </location>
</feature>
<feature type="binding site" evidence="2">
    <location>
        <begin position="76"/>
        <end position="82"/>
    </location>
    <ligand>
        <name>GTP</name>
        <dbReference type="ChEBI" id="CHEBI:37565"/>
    </ligand>
</feature>
<feature type="binding site" description="in other chain" evidence="2">
    <location>
        <begin position="77"/>
        <end position="80"/>
    </location>
    <ligand>
        <name>IMP</name>
        <dbReference type="ChEBI" id="CHEBI:58053"/>
        <note>ligand shared between dimeric partners</note>
    </ligand>
</feature>
<feature type="binding site" evidence="2">
    <location>
        <position position="77"/>
    </location>
    <ligand>
        <name>Mg(2+)</name>
        <dbReference type="ChEBI" id="CHEBI:18420"/>
    </ligand>
</feature>
<feature type="binding site" description="in other chain" evidence="2">
    <location>
        <begin position="102"/>
        <end position="105"/>
    </location>
    <ligand>
        <name>IMP</name>
        <dbReference type="ChEBI" id="CHEBI:58053"/>
        <note>ligand shared between dimeric partners</note>
    </ligand>
</feature>
<feature type="binding site" evidence="2">
    <location>
        <begin position="104"/>
        <end position="106"/>
    </location>
    <ligand>
        <name>GTP</name>
        <dbReference type="ChEBI" id="CHEBI:37565"/>
    </ligand>
</feature>
<feature type="binding site" evidence="2">
    <location>
        <position position="104"/>
    </location>
    <ligand>
        <name>Mg(2+)</name>
        <dbReference type="ChEBI" id="CHEBI:18420"/>
    </ligand>
</feature>
<feature type="binding site" description="in other chain" evidence="2">
    <location>
        <position position="194"/>
    </location>
    <ligand>
        <name>IMP</name>
        <dbReference type="ChEBI" id="CHEBI:58053"/>
        <note>ligand shared between dimeric partners</note>
    </ligand>
</feature>
<feature type="binding site" evidence="2">
    <location>
        <position position="208"/>
    </location>
    <ligand>
        <name>IMP</name>
        <dbReference type="ChEBI" id="CHEBI:58053"/>
        <note>ligand shared between dimeric partners</note>
    </ligand>
</feature>
<feature type="binding site" description="in other chain" evidence="2">
    <location>
        <position position="288"/>
    </location>
    <ligand>
        <name>IMP</name>
        <dbReference type="ChEBI" id="CHEBI:58053"/>
        <note>ligand shared between dimeric partners</note>
    </ligand>
</feature>
<feature type="binding site" description="in other chain" evidence="2">
    <location>
        <position position="303"/>
    </location>
    <ligand>
        <name>IMP</name>
        <dbReference type="ChEBI" id="CHEBI:58053"/>
        <note>ligand shared between dimeric partners</note>
    </ligand>
</feature>
<feature type="binding site" evidence="2">
    <location>
        <begin position="363"/>
        <end position="369"/>
    </location>
    <ligand>
        <name>substrate</name>
    </ligand>
</feature>
<feature type="binding site" description="in other chain" evidence="2">
    <location>
        <position position="367"/>
    </location>
    <ligand>
        <name>IMP</name>
        <dbReference type="ChEBI" id="CHEBI:58053"/>
        <note>ligand shared between dimeric partners</note>
    </ligand>
</feature>
<feature type="binding site" evidence="2">
    <location>
        <position position="369"/>
    </location>
    <ligand>
        <name>GTP</name>
        <dbReference type="ChEBI" id="CHEBI:37565"/>
    </ligand>
</feature>
<feature type="binding site" evidence="2">
    <location>
        <begin position="395"/>
        <end position="397"/>
    </location>
    <ligand>
        <name>GTP</name>
        <dbReference type="ChEBI" id="CHEBI:37565"/>
    </ligand>
</feature>
<feature type="binding site" evidence="2">
    <location>
        <begin position="478"/>
        <end position="480"/>
    </location>
    <ligand>
        <name>GTP</name>
        <dbReference type="ChEBI" id="CHEBI:37565"/>
    </ligand>
</feature>
<evidence type="ECO:0000250" key="1"/>
<evidence type="ECO:0000255" key="2">
    <source>
        <dbReference type="HAMAP-Rule" id="MF_03125"/>
    </source>
</evidence>